<accession>Q4R8B9</accession>
<accession>Q95JJ3</accession>
<accession>Q95JZ3</accession>
<name>HORM1_MACFA</name>
<comment type="function">
    <text evidence="1">Plays a key role in meiotic progression. Regulates 3 different functions during meiosis: ensures that sufficient numbers of processed DNA double-strand breaks (DSBs) are available for successful homology search by increasing the steady-state numbers of single-stranded DSB ends. Promotes synaptonemal-complex formation independently of its role in homology search. Plays a key role in the male mid-pachytene checkpoint and the female meiotic prophase checkpoint: required for efficient build-up of ATR activity on unsynapsed chromosome regions, a process believed to form the basis of meiotic silencing of unsynapsed chromatin (MSUC) and meiotic prophase quality control in both sexes.</text>
</comment>
<comment type="subunit">
    <text evidence="1">Interacts with HORMAD2. Interacts with IHO1.</text>
</comment>
<comment type="subcellular location">
    <subcellularLocation>
        <location evidence="1">Nucleus</location>
    </subcellularLocation>
    <subcellularLocation>
        <location evidence="1">Chromosome</location>
    </subcellularLocation>
    <text evidence="1">Preferentially localizes to unsynapsed or desynapsed chromosomal regions during the prophase I stage of meiosis. TRIP13 is required for depletion from synapsed chromosomes. The expression of the phosphorylated form at Ser-377 is restricted to unsynapsed chromosomal regions (By similarity).</text>
</comment>
<comment type="PTM">
    <text evidence="1">Phosphorylated at Ser-377 in a SPO11-dependent manner.</text>
</comment>
<comment type="sequence caution" evidence="4">
    <conflict type="erroneous initiation">
        <sequence resource="EMBL-CDS" id="BAB62979"/>
    </conflict>
    <text>Truncated N-terminus.</text>
</comment>
<comment type="sequence caution" evidence="4">
    <conflict type="erroneous initiation">
        <sequence resource="EMBL-CDS" id="BAB63133"/>
    </conflict>
    <text>Truncated N-terminus.</text>
</comment>
<keyword id="KW-0158">Chromosome</keyword>
<keyword id="KW-0221">Differentiation</keyword>
<keyword id="KW-0469">Meiosis</keyword>
<keyword id="KW-0539">Nucleus</keyword>
<keyword id="KW-0896">Oogenesis</keyword>
<keyword id="KW-0597">Phosphoprotein</keyword>
<keyword id="KW-1185">Reference proteome</keyword>
<keyword id="KW-0744">Spermatogenesis</keyword>
<feature type="chain" id="PRO_0000284665" description="HORMA domain-containing protein 1">
    <location>
        <begin position="1"/>
        <end position="394"/>
    </location>
</feature>
<feature type="domain" description="HORMA" evidence="2">
    <location>
        <begin position="24"/>
        <end position="226"/>
    </location>
</feature>
<feature type="region of interest" description="Disordered" evidence="3">
    <location>
        <begin position="252"/>
        <end position="394"/>
    </location>
</feature>
<feature type="short sequence motif" description="Nuclear localization signal" evidence="4">
    <location>
        <begin position="383"/>
        <end position="386"/>
    </location>
</feature>
<feature type="compositionally biased region" description="Basic and acidic residues" evidence="3">
    <location>
        <begin position="253"/>
        <end position="282"/>
    </location>
</feature>
<feature type="compositionally biased region" description="Polar residues" evidence="3">
    <location>
        <begin position="310"/>
        <end position="324"/>
    </location>
</feature>
<feature type="compositionally biased region" description="Polar residues" evidence="3">
    <location>
        <begin position="343"/>
        <end position="352"/>
    </location>
</feature>
<feature type="compositionally biased region" description="Basic and acidic residues" evidence="3">
    <location>
        <begin position="362"/>
        <end position="374"/>
    </location>
</feature>
<feature type="modified residue" description="Phosphoserine" evidence="1">
    <location>
        <position position="376"/>
    </location>
</feature>
<feature type="sequence conflict" description="In Ref. 3; BAB62979." evidence="4" ref="3">
    <original>N</original>
    <variation>D</variation>
    <location>
        <position position="283"/>
    </location>
</feature>
<proteinExistence type="evidence at transcript level"/>
<protein>
    <recommendedName>
        <fullName>HORMA domain-containing protein 1</fullName>
    </recommendedName>
</protein>
<dbReference type="EMBL" id="AB168538">
    <property type="protein sequence ID" value="BAE00653.1"/>
    <property type="molecule type" value="mRNA"/>
</dbReference>
<dbReference type="EMBL" id="AB070034">
    <property type="protein sequence ID" value="BAB62979.1"/>
    <property type="status" value="ALT_INIT"/>
    <property type="molecule type" value="mRNA"/>
</dbReference>
<dbReference type="EMBL" id="AB070188">
    <property type="protein sequence ID" value="BAB63133.1"/>
    <property type="status" value="ALT_INIT"/>
    <property type="molecule type" value="mRNA"/>
</dbReference>
<dbReference type="RefSeq" id="XP_005542028.1">
    <property type="nucleotide sequence ID" value="XM_005541971.2"/>
</dbReference>
<dbReference type="RefSeq" id="XP_005542029.1">
    <property type="nucleotide sequence ID" value="XM_005541972.4"/>
</dbReference>
<dbReference type="SMR" id="Q4R8B9"/>
<dbReference type="STRING" id="9541.ENSMFAP00000009464"/>
<dbReference type="Ensembl" id="ENSMFAT00000020530.2">
    <property type="protein sequence ID" value="ENSMFAP00000009464.1"/>
    <property type="gene ID" value="ENSMFAG00000000795.2"/>
</dbReference>
<dbReference type="GeneID" id="101867396"/>
<dbReference type="KEGG" id="mcf:101867396"/>
<dbReference type="CTD" id="84072"/>
<dbReference type="VEuPathDB" id="HostDB:ENSMFAG00000000795"/>
<dbReference type="eggNOG" id="KOG4652">
    <property type="taxonomic scope" value="Eukaryota"/>
</dbReference>
<dbReference type="GeneTree" id="ENSGT00390000018130"/>
<dbReference type="OMA" id="IFQNKMV"/>
<dbReference type="OrthoDB" id="10163at314294"/>
<dbReference type="Proteomes" id="UP000233100">
    <property type="component" value="Chromosome 1"/>
</dbReference>
<dbReference type="Bgee" id="ENSMFAG00000000795">
    <property type="expression patterns" value="Expressed in multicellular organism"/>
</dbReference>
<dbReference type="GO" id="GO:0005694">
    <property type="term" value="C:chromosome"/>
    <property type="evidence" value="ECO:0000250"/>
    <property type="project" value="UniProtKB"/>
</dbReference>
<dbReference type="GO" id="GO:0005634">
    <property type="term" value="C:nucleus"/>
    <property type="evidence" value="ECO:0000250"/>
    <property type="project" value="UniProtKB"/>
</dbReference>
<dbReference type="GO" id="GO:0000795">
    <property type="term" value="C:synaptonemal complex"/>
    <property type="evidence" value="ECO:0007669"/>
    <property type="project" value="Ensembl"/>
</dbReference>
<dbReference type="GO" id="GO:0001824">
    <property type="term" value="P:blastocyst development"/>
    <property type="evidence" value="ECO:0000250"/>
    <property type="project" value="UniProtKB"/>
</dbReference>
<dbReference type="GO" id="GO:0051321">
    <property type="term" value="P:meiotic cell cycle"/>
    <property type="evidence" value="ECO:0000250"/>
    <property type="project" value="UniProtKB"/>
</dbReference>
<dbReference type="GO" id="GO:0042138">
    <property type="term" value="P:meiotic DNA double-strand break formation"/>
    <property type="evidence" value="ECO:0000250"/>
    <property type="project" value="UniProtKB"/>
</dbReference>
<dbReference type="GO" id="GO:0051598">
    <property type="term" value="P:meiotic recombination checkpoint signaling"/>
    <property type="evidence" value="ECO:0000250"/>
    <property type="project" value="UniProtKB"/>
</dbReference>
<dbReference type="GO" id="GO:0051177">
    <property type="term" value="P:meiotic sister chromatid cohesion"/>
    <property type="evidence" value="ECO:0000250"/>
    <property type="project" value="UniProtKB"/>
</dbReference>
<dbReference type="GO" id="GO:0048477">
    <property type="term" value="P:oogenesis"/>
    <property type="evidence" value="ECO:0000250"/>
    <property type="project" value="UniProtKB"/>
</dbReference>
<dbReference type="GO" id="GO:0060629">
    <property type="term" value="P:regulation of homologous chromosome segregation"/>
    <property type="evidence" value="ECO:0000250"/>
    <property type="project" value="UniProtKB"/>
</dbReference>
<dbReference type="GO" id="GO:0007283">
    <property type="term" value="P:spermatogenesis"/>
    <property type="evidence" value="ECO:0000250"/>
    <property type="project" value="UniProtKB"/>
</dbReference>
<dbReference type="GO" id="GO:0007130">
    <property type="term" value="P:synaptonemal complex assembly"/>
    <property type="evidence" value="ECO:0000250"/>
    <property type="project" value="UniProtKB"/>
</dbReference>
<dbReference type="FunFam" id="3.30.900.10:FF:000006">
    <property type="entry name" value="HORMA domain-containing protein 1"/>
    <property type="match status" value="1"/>
</dbReference>
<dbReference type="Gene3D" id="3.30.900.10">
    <property type="entry name" value="HORMA domain"/>
    <property type="match status" value="1"/>
</dbReference>
<dbReference type="InterPro" id="IPR003511">
    <property type="entry name" value="HORMA_dom"/>
</dbReference>
<dbReference type="InterPro" id="IPR036570">
    <property type="entry name" value="HORMA_dom_sf"/>
</dbReference>
<dbReference type="InterPro" id="IPR051294">
    <property type="entry name" value="HORMA_MeioticProgression"/>
</dbReference>
<dbReference type="PANTHER" id="PTHR48225">
    <property type="entry name" value="HORMA DOMAIN-CONTAINING PROTEIN 1"/>
    <property type="match status" value="1"/>
</dbReference>
<dbReference type="PANTHER" id="PTHR48225:SF1">
    <property type="entry name" value="HORMA DOMAIN-CONTAINING PROTEIN 1"/>
    <property type="match status" value="1"/>
</dbReference>
<dbReference type="Pfam" id="PF02301">
    <property type="entry name" value="HORMA"/>
    <property type="match status" value="1"/>
</dbReference>
<dbReference type="SUPFAM" id="SSF56019">
    <property type="entry name" value="The spindle assembly checkpoint protein mad2"/>
    <property type="match status" value="1"/>
</dbReference>
<dbReference type="PROSITE" id="PS50815">
    <property type="entry name" value="HORMA"/>
    <property type="match status" value="1"/>
</dbReference>
<sequence length="394" mass="45163">MATAQLQRTPMSALVFPNKISTEHQSLVLVKRLLAVSVSCITYLRGIFPECAYGTRYLDDLCVKILREDKNCPGSTQLVKWMLGCYDALQKKYLRMVVLAVYTNPEDPQTISECYQFKFKYTNNGPLMDFISKNQSNESSMSSTDTKKASILLIRKIYILMQNLGPLPNDVCLTMKLFYYDEVTPPDYQPPGFKDGDCEGVIFEGEPMYLNVGEVSTPFHIFKVKVTTERERMENIDSTILSPKQIKTPFQKILRDKDVEDEQEHYTSDDLDMETKMEEQEKNPASSELGEPSLVCEEDEIMRSKESPDLSISHSQVEQLVNKTSELDMSESKTRSGKVFQNKMANGNQPVKSSKENRKRSQHESGRRVLHHFDSSSQESVPKRRKFSEPKEHI</sequence>
<gene>
    <name type="primary">HORMAD1</name>
    <name type="ORF">QtsA-11904</name>
    <name type="ORF">QtsA-12863</name>
    <name type="ORF">QtsA-16861</name>
</gene>
<organism>
    <name type="scientific">Macaca fascicularis</name>
    <name type="common">Crab-eating macaque</name>
    <name type="synonym">Cynomolgus monkey</name>
    <dbReference type="NCBI Taxonomy" id="9541"/>
    <lineage>
        <taxon>Eukaryota</taxon>
        <taxon>Metazoa</taxon>
        <taxon>Chordata</taxon>
        <taxon>Craniata</taxon>
        <taxon>Vertebrata</taxon>
        <taxon>Euteleostomi</taxon>
        <taxon>Mammalia</taxon>
        <taxon>Eutheria</taxon>
        <taxon>Euarchontoglires</taxon>
        <taxon>Primates</taxon>
        <taxon>Haplorrhini</taxon>
        <taxon>Catarrhini</taxon>
        <taxon>Cercopithecidae</taxon>
        <taxon>Cercopithecinae</taxon>
        <taxon>Macaca</taxon>
    </lineage>
</organism>
<evidence type="ECO:0000250" key="1">
    <source>
        <dbReference type="UniProtKB" id="Q9D5T7"/>
    </source>
</evidence>
<evidence type="ECO:0000255" key="2">
    <source>
        <dbReference type="PROSITE-ProRule" id="PRU00109"/>
    </source>
</evidence>
<evidence type="ECO:0000256" key="3">
    <source>
        <dbReference type="SAM" id="MobiDB-lite"/>
    </source>
</evidence>
<evidence type="ECO:0000305" key="4"/>
<reference key="1">
    <citation type="submission" date="2005-06" db="EMBL/GenBank/DDBJ databases">
        <title>DNA sequences of macaque genes expressed in brain or testis and its evolutionary implications.</title>
        <authorList>
            <consortium name="International consortium for macaque cDNA sequencing and analysis"/>
        </authorList>
    </citation>
    <scope>NUCLEOTIDE SEQUENCE [LARGE SCALE MRNA]</scope>
    <source>
        <tissue>Testis</tissue>
    </source>
</reference>
<reference key="2">
    <citation type="journal article" date="2002" name="BMC Genomics">
        <title>Cynomolgus monkey testicular cDNAs for discovery of novel human genes in the human genome sequence.</title>
        <authorList>
            <person name="Osada N."/>
            <person name="Hida M."/>
            <person name="Kusuda J."/>
            <person name="Tanuma R."/>
            <person name="Hirata M."/>
            <person name="Suto Y."/>
            <person name="Hirai M."/>
            <person name="Terao K."/>
            <person name="Sugano S."/>
            <person name="Hashimoto K."/>
        </authorList>
    </citation>
    <scope>NUCLEOTIDE SEQUENCE [LARGE SCALE MRNA] OF 97-394</scope>
    <source>
        <tissue>Testis</tissue>
    </source>
</reference>
<reference key="3">
    <citation type="submission" date="2001-08" db="EMBL/GenBank/DDBJ databases">
        <title>Isolation of novel full-length cDNA clones from macaque testis cDNA libraries.</title>
        <authorList>
            <person name="Hashimoto K."/>
            <person name="Osada N."/>
            <person name="Hida M."/>
            <person name="Kusuda J."/>
            <person name="Tanuma R."/>
            <person name="Hirai M."/>
            <person name="Terao K."/>
            <person name="Sugano S."/>
        </authorList>
    </citation>
    <scope>NUCLEOTIDE SEQUENCE [LARGE SCALE MRNA] OF 177-394</scope>
    <source>
        <tissue>Testis</tissue>
    </source>
</reference>
<reference key="4">
    <citation type="journal article" date="2005" name="Cancer Immun.">
        <title>Identification of CT46/HORMAD1, an immunogenic cancer/testis antigen encoding a putative meiosis-related protein.</title>
        <authorList>
            <person name="Chen Y.-T."/>
            <person name="Venditti C.A."/>
            <person name="Theiler G."/>
            <person name="Stevenson B.J."/>
            <person name="Iseli C."/>
            <person name="Gure A.O."/>
            <person name="Jongeneel C.V."/>
            <person name="Old L.J."/>
            <person name="Simpson A.J.G."/>
        </authorList>
    </citation>
    <scope>IDENTIFICATION</scope>
</reference>